<proteinExistence type="inferred from homology"/>
<reference key="1">
    <citation type="journal article" date="2007" name="Nat. Biotechnol.">
        <title>Complete genome sequence of the erythromycin-producing bacterium Saccharopolyspora erythraea NRRL23338.</title>
        <authorList>
            <person name="Oliynyk M."/>
            <person name="Samborskyy M."/>
            <person name="Lester J.B."/>
            <person name="Mironenko T."/>
            <person name="Scott N."/>
            <person name="Dickens S."/>
            <person name="Haydock S.F."/>
            <person name="Leadlay P.F."/>
        </authorList>
    </citation>
    <scope>NUCLEOTIDE SEQUENCE [LARGE SCALE GENOMIC DNA]</scope>
    <source>
        <strain>ATCC 11635 / DSM 40517 / JCM 4748 / NBRC 13426 / NCIMB 8594 / NRRL 2338</strain>
    </source>
</reference>
<keyword id="KW-0067">ATP-binding</keyword>
<keyword id="KW-0460">Magnesium</keyword>
<keyword id="KW-0547">Nucleotide-binding</keyword>
<keyword id="KW-1185">Reference proteome</keyword>
<keyword id="KW-0808">Transferase</keyword>
<keyword id="KW-0819">tRNA processing</keyword>
<dbReference type="EC" id="2.5.1.75" evidence="1"/>
<dbReference type="EMBL" id="AM420293">
    <property type="protein sequence ID" value="CAM01070.1"/>
    <property type="molecule type" value="Genomic_DNA"/>
</dbReference>
<dbReference type="RefSeq" id="WP_011873459.1">
    <property type="nucleotide sequence ID" value="NC_009142.1"/>
</dbReference>
<dbReference type="SMR" id="A4FAJ5"/>
<dbReference type="STRING" id="405948.SACE_1752"/>
<dbReference type="KEGG" id="sen:SACE_1752"/>
<dbReference type="eggNOG" id="COG0324">
    <property type="taxonomic scope" value="Bacteria"/>
</dbReference>
<dbReference type="HOGENOM" id="CLU_032616_0_1_11"/>
<dbReference type="OrthoDB" id="9776390at2"/>
<dbReference type="Proteomes" id="UP000006728">
    <property type="component" value="Chromosome"/>
</dbReference>
<dbReference type="GO" id="GO:0005524">
    <property type="term" value="F:ATP binding"/>
    <property type="evidence" value="ECO:0007669"/>
    <property type="project" value="UniProtKB-UniRule"/>
</dbReference>
<dbReference type="GO" id="GO:0052381">
    <property type="term" value="F:tRNA dimethylallyltransferase activity"/>
    <property type="evidence" value="ECO:0007669"/>
    <property type="project" value="UniProtKB-UniRule"/>
</dbReference>
<dbReference type="GO" id="GO:0006400">
    <property type="term" value="P:tRNA modification"/>
    <property type="evidence" value="ECO:0007669"/>
    <property type="project" value="TreeGrafter"/>
</dbReference>
<dbReference type="FunFam" id="1.10.20.140:FF:000001">
    <property type="entry name" value="tRNA dimethylallyltransferase"/>
    <property type="match status" value="1"/>
</dbReference>
<dbReference type="Gene3D" id="1.10.20.140">
    <property type="match status" value="1"/>
</dbReference>
<dbReference type="Gene3D" id="3.40.50.300">
    <property type="entry name" value="P-loop containing nucleotide triphosphate hydrolases"/>
    <property type="match status" value="1"/>
</dbReference>
<dbReference type="HAMAP" id="MF_00185">
    <property type="entry name" value="IPP_trans"/>
    <property type="match status" value="1"/>
</dbReference>
<dbReference type="InterPro" id="IPR039657">
    <property type="entry name" value="Dimethylallyltransferase"/>
</dbReference>
<dbReference type="InterPro" id="IPR018022">
    <property type="entry name" value="IPT"/>
</dbReference>
<dbReference type="InterPro" id="IPR027417">
    <property type="entry name" value="P-loop_NTPase"/>
</dbReference>
<dbReference type="NCBIfam" id="TIGR00174">
    <property type="entry name" value="miaA"/>
    <property type="match status" value="1"/>
</dbReference>
<dbReference type="PANTHER" id="PTHR11088">
    <property type="entry name" value="TRNA DIMETHYLALLYLTRANSFERASE"/>
    <property type="match status" value="1"/>
</dbReference>
<dbReference type="PANTHER" id="PTHR11088:SF60">
    <property type="entry name" value="TRNA DIMETHYLALLYLTRANSFERASE"/>
    <property type="match status" value="1"/>
</dbReference>
<dbReference type="Pfam" id="PF01715">
    <property type="entry name" value="IPPT"/>
    <property type="match status" value="1"/>
</dbReference>
<dbReference type="SUPFAM" id="SSF52540">
    <property type="entry name" value="P-loop containing nucleoside triphosphate hydrolases"/>
    <property type="match status" value="1"/>
</dbReference>
<gene>
    <name evidence="1" type="primary">miaA</name>
    <name type="ordered locus">SACE_1752</name>
</gene>
<feature type="chain" id="PRO_0000377302" description="tRNA dimethylallyltransferase">
    <location>
        <begin position="1"/>
        <end position="310"/>
    </location>
</feature>
<feature type="binding site" evidence="1">
    <location>
        <begin position="19"/>
        <end position="26"/>
    </location>
    <ligand>
        <name>ATP</name>
        <dbReference type="ChEBI" id="CHEBI:30616"/>
    </ligand>
</feature>
<feature type="binding site" evidence="1">
    <location>
        <begin position="21"/>
        <end position="26"/>
    </location>
    <ligand>
        <name>substrate</name>
    </ligand>
</feature>
<feature type="site" description="Interaction with substrate tRNA" evidence="1">
    <location>
        <position position="110"/>
    </location>
</feature>
<feature type="site" description="Interaction with substrate tRNA" evidence="1">
    <location>
        <position position="131"/>
    </location>
</feature>
<comment type="function">
    <text evidence="1">Catalyzes the transfer of a dimethylallyl group onto the adenine at position 37 in tRNAs that read codons beginning with uridine, leading to the formation of N6-(dimethylallyl)adenosine (i(6)A).</text>
</comment>
<comment type="catalytic activity">
    <reaction evidence="1">
        <text>adenosine(37) in tRNA + dimethylallyl diphosphate = N(6)-dimethylallyladenosine(37) in tRNA + diphosphate</text>
        <dbReference type="Rhea" id="RHEA:26482"/>
        <dbReference type="Rhea" id="RHEA-COMP:10162"/>
        <dbReference type="Rhea" id="RHEA-COMP:10375"/>
        <dbReference type="ChEBI" id="CHEBI:33019"/>
        <dbReference type="ChEBI" id="CHEBI:57623"/>
        <dbReference type="ChEBI" id="CHEBI:74411"/>
        <dbReference type="ChEBI" id="CHEBI:74415"/>
        <dbReference type="EC" id="2.5.1.75"/>
    </reaction>
</comment>
<comment type="cofactor">
    <cofactor evidence="1">
        <name>Mg(2+)</name>
        <dbReference type="ChEBI" id="CHEBI:18420"/>
    </cofactor>
</comment>
<comment type="subunit">
    <text evidence="1">Monomer.</text>
</comment>
<comment type="similarity">
    <text evidence="1">Belongs to the IPP transferase family.</text>
</comment>
<evidence type="ECO:0000255" key="1">
    <source>
        <dbReference type="HAMAP-Rule" id="MF_00185"/>
    </source>
</evidence>
<protein>
    <recommendedName>
        <fullName evidence="1">tRNA dimethylallyltransferase</fullName>
        <ecNumber evidence="1">2.5.1.75</ecNumber>
    </recommendedName>
    <alternativeName>
        <fullName evidence="1">Dimethylallyl diphosphate:tRNA dimethylallyltransferase</fullName>
        <shortName evidence="1">DMAPP:tRNA dimethylallyltransferase</shortName>
        <shortName evidence="1">DMATase</shortName>
    </alternativeName>
    <alternativeName>
        <fullName evidence="1">Isopentenyl-diphosphate:tRNA isopentenyltransferase</fullName>
        <shortName evidence="1">IPP transferase</shortName>
        <shortName evidence="1">IPPT</shortName>
        <shortName evidence="1">IPTase</shortName>
    </alternativeName>
</protein>
<sequence length="310" mass="33980">MSTVSSSRGSAPRLLAIVGPTGTGKSELAVDLAEELGGEVVNADAMQLYKGMDIGTAKLTTAERRGVPHHLLDVLDVTETASVAAYQRHARHAVEELLEAGRTPLLVGGSGLYVQAVLDDLAFPGTDEQVRARWEEELHLHGAAVLHRRLRELDPVAADAILPTNGRRLVRALEVIEITGRPFSAHLPKPGPPRYGAVLVGLDREVAELDDRIDLRVTRMFDNGLVEEVRELEKQGLRRGRTASRALGYQQVLAELDGAGDMAAAAAETAKLHRRFVRRQRSWFRRDKRIHWFDAARPGLAGDVRALLDT</sequence>
<accession>A4FAJ5</accession>
<organism>
    <name type="scientific">Saccharopolyspora erythraea (strain ATCC 11635 / DSM 40517 / JCM 4748 / NBRC 13426 / NCIMB 8594 / NRRL 2338)</name>
    <dbReference type="NCBI Taxonomy" id="405948"/>
    <lineage>
        <taxon>Bacteria</taxon>
        <taxon>Bacillati</taxon>
        <taxon>Actinomycetota</taxon>
        <taxon>Actinomycetes</taxon>
        <taxon>Pseudonocardiales</taxon>
        <taxon>Pseudonocardiaceae</taxon>
        <taxon>Saccharopolyspora</taxon>
    </lineage>
</organism>
<name>MIAA_SACEN</name>